<protein>
    <recommendedName>
        <fullName>Homeobox-leucine zipper protein ATHB-16</fullName>
    </recommendedName>
    <alternativeName>
        <fullName>HD-ZIP protein ATHB-16</fullName>
    </alternativeName>
    <alternativeName>
        <fullName>Homeodomain transcription factor ATHB-16</fullName>
    </alternativeName>
</protein>
<proteinExistence type="evidence at transcript level"/>
<organism>
    <name type="scientific">Arabidopsis thaliana</name>
    <name type="common">Mouse-ear cress</name>
    <dbReference type="NCBI Taxonomy" id="3702"/>
    <lineage>
        <taxon>Eukaryota</taxon>
        <taxon>Viridiplantae</taxon>
        <taxon>Streptophyta</taxon>
        <taxon>Embryophyta</taxon>
        <taxon>Tracheophyta</taxon>
        <taxon>Spermatophyta</taxon>
        <taxon>Magnoliopsida</taxon>
        <taxon>eudicotyledons</taxon>
        <taxon>Gunneridae</taxon>
        <taxon>Pentapetalae</taxon>
        <taxon>rosids</taxon>
        <taxon>malvids</taxon>
        <taxon>Brassicales</taxon>
        <taxon>Brassicaceae</taxon>
        <taxon>Camelineae</taxon>
        <taxon>Arabidopsis</taxon>
    </lineage>
</organism>
<gene>
    <name type="primary">ATHB-16</name>
    <name type="ordered locus">At4g40060</name>
    <name type="ORF">T5J17.230</name>
</gene>
<comment type="function">
    <text evidence="3">Probable transcription factor that may function as a negative regulator of the flowering time response to photoperiod. May act to repress cell expansion during plant development.</text>
</comment>
<comment type="subcellular location">
    <subcellularLocation>
        <location evidence="5">Nucleus</location>
    </subcellularLocation>
</comment>
<comment type="tissue specificity">
    <text evidence="4">Widely expressed with a lower level in siliques.</text>
</comment>
<comment type="similarity">
    <text evidence="5">Belongs to the HD-ZIP homeobox family. Class I subfamily.</text>
</comment>
<comment type="sequence caution" evidence="5">
    <conflict type="erroneous gene model prediction">
        <sequence resource="EMBL-CDS" id="CAB38919"/>
    </conflict>
</comment>
<evidence type="ECO:0000255" key="1">
    <source>
        <dbReference type="PROSITE-ProRule" id="PRU00108"/>
    </source>
</evidence>
<evidence type="ECO:0000256" key="2">
    <source>
        <dbReference type="SAM" id="MobiDB-lite"/>
    </source>
</evidence>
<evidence type="ECO:0000269" key="3">
    <source>
    </source>
</evidence>
<evidence type="ECO:0000269" key="4">
    <source>
    </source>
</evidence>
<evidence type="ECO:0000305" key="5"/>
<keyword id="KW-0238">DNA-binding</keyword>
<keyword id="KW-0371">Homeobox</keyword>
<keyword id="KW-0539">Nucleus</keyword>
<keyword id="KW-1185">Reference proteome</keyword>
<keyword id="KW-0804">Transcription</keyword>
<keyword id="KW-0805">Transcription regulation</keyword>
<dbReference type="EMBL" id="AF076641">
    <property type="protein sequence ID" value="AAD46064.1"/>
    <property type="molecule type" value="Genomic_DNA"/>
</dbReference>
<dbReference type="EMBL" id="AL035708">
    <property type="protein sequence ID" value="CAB38919.1"/>
    <property type="status" value="ALT_SEQ"/>
    <property type="molecule type" value="Genomic_DNA"/>
</dbReference>
<dbReference type="EMBL" id="AL161596">
    <property type="protein sequence ID" value="CAB80669.1"/>
    <property type="molecule type" value="Genomic_DNA"/>
</dbReference>
<dbReference type="EMBL" id="CP002687">
    <property type="protein sequence ID" value="AEE87163.1"/>
    <property type="molecule type" value="Genomic_DNA"/>
</dbReference>
<dbReference type="EMBL" id="AF370620">
    <property type="protein sequence ID" value="AAK43939.1"/>
    <property type="molecule type" value="mRNA"/>
</dbReference>
<dbReference type="EMBL" id="AY054571">
    <property type="protein sequence ID" value="AAK96762.1"/>
    <property type="molecule type" value="mRNA"/>
</dbReference>
<dbReference type="EMBL" id="AY128917">
    <property type="protein sequence ID" value="AAM91317.1"/>
    <property type="molecule type" value="mRNA"/>
</dbReference>
<dbReference type="PIR" id="G85474">
    <property type="entry name" value="G85474"/>
</dbReference>
<dbReference type="PIR" id="T06112">
    <property type="entry name" value="T06112"/>
</dbReference>
<dbReference type="RefSeq" id="NP_195716.1">
    <property type="nucleotide sequence ID" value="NM_120171.3"/>
</dbReference>
<dbReference type="SMR" id="Q940J1"/>
<dbReference type="BioGRID" id="15449">
    <property type="interactions" value="4"/>
</dbReference>
<dbReference type="FunCoup" id="Q940J1">
    <property type="interactions" value="56"/>
</dbReference>
<dbReference type="IntAct" id="Q940J1">
    <property type="interactions" value="2"/>
</dbReference>
<dbReference type="STRING" id="3702.Q940J1"/>
<dbReference type="iPTMnet" id="Q940J1"/>
<dbReference type="PaxDb" id="3702-AT4G40060.1"/>
<dbReference type="ProteomicsDB" id="246530"/>
<dbReference type="EnsemblPlants" id="AT4G40060.1">
    <property type="protein sequence ID" value="AT4G40060.1"/>
    <property type="gene ID" value="AT4G40060"/>
</dbReference>
<dbReference type="GeneID" id="830169"/>
<dbReference type="Gramene" id="AT4G40060.1">
    <property type="protein sequence ID" value="AT4G40060.1"/>
    <property type="gene ID" value="AT4G40060"/>
</dbReference>
<dbReference type="KEGG" id="ath:AT4G40060"/>
<dbReference type="Araport" id="AT4G40060"/>
<dbReference type="TAIR" id="AT4G40060">
    <property type="gene designation" value="HB16"/>
</dbReference>
<dbReference type="eggNOG" id="KOG0483">
    <property type="taxonomic scope" value="Eukaryota"/>
</dbReference>
<dbReference type="HOGENOM" id="CLU_060842_1_0_1"/>
<dbReference type="InParanoid" id="Q940J1"/>
<dbReference type="OMA" id="MAPEKAH"/>
<dbReference type="OrthoDB" id="6159439at2759"/>
<dbReference type="PhylomeDB" id="Q940J1"/>
<dbReference type="PRO" id="PR:Q940J1"/>
<dbReference type="Proteomes" id="UP000006548">
    <property type="component" value="Chromosome 4"/>
</dbReference>
<dbReference type="ExpressionAtlas" id="Q940J1">
    <property type="expression patterns" value="baseline and differential"/>
</dbReference>
<dbReference type="GO" id="GO:0005634">
    <property type="term" value="C:nucleus"/>
    <property type="evidence" value="ECO:0007669"/>
    <property type="project" value="UniProtKB-SubCell"/>
</dbReference>
<dbReference type="GO" id="GO:0003700">
    <property type="term" value="F:DNA-binding transcription factor activity"/>
    <property type="evidence" value="ECO:0000250"/>
    <property type="project" value="TAIR"/>
</dbReference>
<dbReference type="GO" id="GO:0000981">
    <property type="term" value="F:DNA-binding transcription factor activity, RNA polymerase II-specific"/>
    <property type="evidence" value="ECO:0007669"/>
    <property type="project" value="InterPro"/>
</dbReference>
<dbReference type="GO" id="GO:0043565">
    <property type="term" value="F:sequence-specific DNA binding"/>
    <property type="evidence" value="ECO:0000314"/>
    <property type="project" value="TAIR"/>
</dbReference>
<dbReference type="GO" id="GO:0000976">
    <property type="term" value="F:transcription cis-regulatory region binding"/>
    <property type="evidence" value="ECO:0000353"/>
    <property type="project" value="TAIR"/>
</dbReference>
<dbReference type="GO" id="GO:0030308">
    <property type="term" value="P:negative regulation of cell growth"/>
    <property type="evidence" value="ECO:0000315"/>
    <property type="project" value="TAIR"/>
</dbReference>
<dbReference type="GO" id="GO:0048573">
    <property type="term" value="P:photoperiodism, flowering"/>
    <property type="evidence" value="ECO:0000315"/>
    <property type="project" value="TAIR"/>
</dbReference>
<dbReference type="GO" id="GO:0045893">
    <property type="term" value="P:positive regulation of DNA-templated transcription"/>
    <property type="evidence" value="ECO:0000314"/>
    <property type="project" value="TAIR"/>
</dbReference>
<dbReference type="GO" id="GO:0048510">
    <property type="term" value="P:regulation of timing of transition from vegetative to reproductive phase"/>
    <property type="evidence" value="ECO:0000315"/>
    <property type="project" value="TAIR"/>
</dbReference>
<dbReference type="GO" id="GO:0009637">
    <property type="term" value="P:response to blue light"/>
    <property type="evidence" value="ECO:0000315"/>
    <property type="project" value="TAIR"/>
</dbReference>
<dbReference type="CDD" id="cd00086">
    <property type="entry name" value="homeodomain"/>
    <property type="match status" value="1"/>
</dbReference>
<dbReference type="FunFam" id="1.10.10.60:FF:000144">
    <property type="entry name" value="homeobox-leucine zipper protein ATHB-6-like"/>
    <property type="match status" value="1"/>
</dbReference>
<dbReference type="Gene3D" id="1.10.10.60">
    <property type="entry name" value="Homeodomain-like"/>
    <property type="match status" value="1"/>
</dbReference>
<dbReference type="InterPro" id="IPR001356">
    <property type="entry name" value="HD"/>
</dbReference>
<dbReference type="InterPro" id="IPR045224">
    <property type="entry name" value="HDZip_class_I_plant"/>
</dbReference>
<dbReference type="InterPro" id="IPR017970">
    <property type="entry name" value="Homeobox_CS"/>
</dbReference>
<dbReference type="InterPro" id="IPR009057">
    <property type="entry name" value="Homeodomain-like_sf"/>
</dbReference>
<dbReference type="InterPro" id="IPR000047">
    <property type="entry name" value="HTH_motif"/>
</dbReference>
<dbReference type="InterPro" id="IPR003106">
    <property type="entry name" value="Leu_zip_homeo"/>
</dbReference>
<dbReference type="PANTHER" id="PTHR24326">
    <property type="entry name" value="HOMEOBOX-LEUCINE ZIPPER PROTEIN"/>
    <property type="match status" value="1"/>
</dbReference>
<dbReference type="PANTHER" id="PTHR24326:SF559">
    <property type="entry name" value="HOMEOBOX-LEUCINE ZIPPER PROTEIN ATHB-16"/>
    <property type="match status" value="1"/>
</dbReference>
<dbReference type="Pfam" id="PF02183">
    <property type="entry name" value="HALZ"/>
    <property type="match status" value="1"/>
</dbReference>
<dbReference type="Pfam" id="PF00046">
    <property type="entry name" value="Homeodomain"/>
    <property type="match status" value="1"/>
</dbReference>
<dbReference type="PRINTS" id="PR00031">
    <property type="entry name" value="HTHREPRESSR"/>
</dbReference>
<dbReference type="SMART" id="SM00389">
    <property type="entry name" value="HOX"/>
    <property type="match status" value="1"/>
</dbReference>
<dbReference type="SUPFAM" id="SSF46689">
    <property type="entry name" value="Homeodomain-like"/>
    <property type="match status" value="1"/>
</dbReference>
<dbReference type="PROSITE" id="PS00027">
    <property type="entry name" value="HOMEOBOX_1"/>
    <property type="match status" value="1"/>
</dbReference>
<dbReference type="PROSITE" id="PS50071">
    <property type="entry name" value="HOMEOBOX_2"/>
    <property type="match status" value="1"/>
</dbReference>
<sequence>MKRLSSSDSMCGLISTSTDEQSPRGYGSNYQSMLEGYDEDATLIEEYSGNHHHMGLSEKKRRLKVDQVKALEKNFELENKLEPERKTKLAQELGLQPRQVAVWFQNRRARWKTKQLEKDYGVLKGQYDSLRHNFDSLRRDNDSLLQEISKIKAKVNGEEDNNNNKAITEGVKEEEVHKTDSIPSSPLQFLEHSSGFNYRRSFTDLRDLLPNSTVVEAGSSDSCDSSAVLNDETSSDNGRLTPPVTVTGGSFLQFVKTEQTEDHEDFLSGEEACGFFSDEQPPSLHWYSASDHWT</sequence>
<reference key="1">
    <citation type="journal article" date="2003" name="Dev. Biol.">
        <title>The Arabidopsis homeobox gene, ATHB16, regulates leaf development and the sensitivity to photoperiod in Arabidopsis.</title>
        <authorList>
            <person name="Wang Y."/>
            <person name="Henriksson E."/>
            <person name="Soederman E."/>
            <person name="Henriksson K.N."/>
            <person name="Sundberg E."/>
            <person name="Engstroem P."/>
        </authorList>
    </citation>
    <scope>NUCLEOTIDE SEQUENCE [GENOMIC DNA]</scope>
    <scope>FUNCTION</scope>
    <source>
        <strain>cv. Columbia</strain>
    </source>
</reference>
<reference key="2">
    <citation type="journal article" date="1999" name="Nature">
        <title>Sequence and analysis of chromosome 4 of the plant Arabidopsis thaliana.</title>
        <authorList>
            <person name="Mayer K.F.X."/>
            <person name="Schueller C."/>
            <person name="Wambutt R."/>
            <person name="Murphy G."/>
            <person name="Volckaert G."/>
            <person name="Pohl T."/>
            <person name="Duesterhoeft A."/>
            <person name="Stiekema W."/>
            <person name="Entian K.-D."/>
            <person name="Terryn N."/>
            <person name="Harris B."/>
            <person name="Ansorge W."/>
            <person name="Brandt P."/>
            <person name="Grivell L.A."/>
            <person name="Rieger M."/>
            <person name="Weichselgartner M."/>
            <person name="de Simone V."/>
            <person name="Obermaier B."/>
            <person name="Mache R."/>
            <person name="Mueller M."/>
            <person name="Kreis M."/>
            <person name="Delseny M."/>
            <person name="Puigdomenech P."/>
            <person name="Watson M."/>
            <person name="Schmidtheini T."/>
            <person name="Reichert B."/>
            <person name="Portetelle D."/>
            <person name="Perez-Alonso M."/>
            <person name="Boutry M."/>
            <person name="Bancroft I."/>
            <person name="Vos P."/>
            <person name="Hoheisel J."/>
            <person name="Zimmermann W."/>
            <person name="Wedler H."/>
            <person name="Ridley P."/>
            <person name="Langham S.-A."/>
            <person name="McCullagh B."/>
            <person name="Bilham L."/>
            <person name="Robben J."/>
            <person name="van der Schueren J."/>
            <person name="Grymonprez B."/>
            <person name="Chuang Y.-J."/>
            <person name="Vandenbussche F."/>
            <person name="Braeken M."/>
            <person name="Weltjens I."/>
            <person name="Voet M."/>
            <person name="Bastiaens I."/>
            <person name="Aert R."/>
            <person name="Defoor E."/>
            <person name="Weitzenegger T."/>
            <person name="Bothe G."/>
            <person name="Ramsperger U."/>
            <person name="Hilbert H."/>
            <person name="Braun M."/>
            <person name="Holzer E."/>
            <person name="Brandt A."/>
            <person name="Peters S."/>
            <person name="van Staveren M."/>
            <person name="Dirkse W."/>
            <person name="Mooijman P."/>
            <person name="Klein Lankhorst R."/>
            <person name="Rose M."/>
            <person name="Hauf J."/>
            <person name="Koetter P."/>
            <person name="Berneiser S."/>
            <person name="Hempel S."/>
            <person name="Feldpausch M."/>
            <person name="Lamberth S."/>
            <person name="Van den Daele H."/>
            <person name="De Keyser A."/>
            <person name="Buysshaert C."/>
            <person name="Gielen J."/>
            <person name="Villarroel R."/>
            <person name="De Clercq R."/>
            <person name="van Montagu M."/>
            <person name="Rogers J."/>
            <person name="Cronin A."/>
            <person name="Quail M.A."/>
            <person name="Bray-Allen S."/>
            <person name="Clark L."/>
            <person name="Doggett J."/>
            <person name="Hall S."/>
            <person name="Kay M."/>
            <person name="Lennard N."/>
            <person name="McLay K."/>
            <person name="Mayes R."/>
            <person name="Pettett A."/>
            <person name="Rajandream M.A."/>
            <person name="Lyne M."/>
            <person name="Benes V."/>
            <person name="Rechmann S."/>
            <person name="Borkova D."/>
            <person name="Bloecker H."/>
            <person name="Scharfe M."/>
            <person name="Grimm M."/>
            <person name="Loehnert T.-H."/>
            <person name="Dose S."/>
            <person name="de Haan M."/>
            <person name="Maarse A.C."/>
            <person name="Schaefer M."/>
            <person name="Mueller-Auer S."/>
            <person name="Gabel C."/>
            <person name="Fuchs M."/>
            <person name="Fartmann B."/>
            <person name="Granderath K."/>
            <person name="Dauner D."/>
            <person name="Herzl A."/>
            <person name="Neumann S."/>
            <person name="Argiriou A."/>
            <person name="Vitale D."/>
            <person name="Liguori R."/>
            <person name="Piravandi E."/>
            <person name="Massenet O."/>
            <person name="Quigley F."/>
            <person name="Clabauld G."/>
            <person name="Muendlein A."/>
            <person name="Felber R."/>
            <person name="Schnabl S."/>
            <person name="Hiller R."/>
            <person name="Schmidt W."/>
            <person name="Lecharny A."/>
            <person name="Aubourg S."/>
            <person name="Chefdor F."/>
            <person name="Cooke R."/>
            <person name="Berger C."/>
            <person name="Monfort A."/>
            <person name="Casacuberta E."/>
            <person name="Gibbons T."/>
            <person name="Weber N."/>
            <person name="Vandenbol M."/>
            <person name="Bargues M."/>
            <person name="Terol J."/>
            <person name="Torres A."/>
            <person name="Perez-Perez A."/>
            <person name="Purnelle B."/>
            <person name="Bent E."/>
            <person name="Johnson S."/>
            <person name="Tacon D."/>
            <person name="Jesse T."/>
            <person name="Heijnen L."/>
            <person name="Schwarz S."/>
            <person name="Scholler P."/>
            <person name="Heber S."/>
            <person name="Francs P."/>
            <person name="Bielke C."/>
            <person name="Frishman D."/>
            <person name="Haase D."/>
            <person name="Lemcke K."/>
            <person name="Mewes H.-W."/>
            <person name="Stocker S."/>
            <person name="Zaccaria P."/>
            <person name="Bevan M."/>
            <person name="Wilson R.K."/>
            <person name="de la Bastide M."/>
            <person name="Habermann K."/>
            <person name="Parnell L."/>
            <person name="Dedhia N."/>
            <person name="Gnoj L."/>
            <person name="Schutz K."/>
            <person name="Huang E."/>
            <person name="Spiegel L."/>
            <person name="Sekhon M."/>
            <person name="Murray J."/>
            <person name="Sheet P."/>
            <person name="Cordes M."/>
            <person name="Abu-Threideh J."/>
            <person name="Stoneking T."/>
            <person name="Kalicki J."/>
            <person name="Graves T."/>
            <person name="Harmon G."/>
            <person name="Edwards J."/>
            <person name="Latreille P."/>
            <person name="Courtney L."/>
            <person name="Cloud J."/>
            <person name="Abbott A."/>
            <person name="Scott K."/>
            <person name="Johnson D."/>
            <person name="Minx P."/>
            <person name="Bentley D."/>
            <person name="Fulton B."/>
            <person name="Miller N."/>
            <person name="Greco T."/>
            <person name="Kemp K."/>
            <person name="Kramer J."/>
            <person name="Fulton L."/>
            <person name="Mardis E."/>
            <person name="Dante M."/>
            <person name="Pepin K."/>
            <person name="Hillier L.W."/>
            <person name="Nelson J."/>
            <person name="Spieth J."/>
            <person name="Ryan E."/>
            <person name="Andrews S."/>
            <person name="Geisel C."/>
            <person name="Layman D."/>
            <person name="Du H."/>
            <person name="Ali J."/>
            <person name="Berghoff A."/>
            <person name="Jones K."/>
            <person name="Drone K."/>
            <person name="Cotton M."/>
            <person name="Joshu C."/>
            <person name="Antonoiu B."/>
            <person name="Zidanic M."/>
            <person name="Strong C."/>
            <person name="Sun H."/>
            <person name="Lamar B."/>
            <person name="Yordan C."/>
            <person name="Ma P."/>
            <person name="Zhong J."/>
            <person name="Preston R."/>
            <person name="Vil D."/>
            <person name="Shekher M."/>
            <person name="Matero A."/>
            <person name="Shah R."/>
            <person name="Swaby I.K."/>
            <person name="O'Shaughnessy A."/>
            <person name="Rodriguez M."/>
            <person name="Hoffman J."/>
            <person name="Till S."/>
            <person name="Granat S."/>
            <person name="Shohdy N."/>
            <person name="Hasegawa A."/>
            <person name="Hameed A."/>
            <person name="Lodhi M."/>
            <person name="Johnson A."/>
            <person name="Chen E."/>
            <person name="Marra M.A."/>
            <person name="Martienssen R."/>
            <person name="McCombie W.R."/>
        </authorList>
    </citation>
    <scope>NUCLEOTIDE SEQUENCE [LARGE SCALE GENOMIC DNA]</scope>
    <source>
        <strain>cv. Columbia</strain>
    </source>
</reference>
<reference key="3">
    <citation type="journal article" date="2017" name="Plant J.">
        <title>Araport11: a complete reannotation of the Arabidopsis thaliana reference genome.</title>
        <authorList>
            <person name="Cheng C.Y."/>
            <person name="Krishnakumar V."/>
            <person name="Chan A.P."/>
            <person name="Thibaud-Nissen F."/>
            <person name="Schobel S."/>
            <person name="Town C.D."/>
        </authorList>
    </citation>
    <scope>GENOME REANNOTATION</scope>
    <source>
        <strain>cv. Columbia</strain>
    </source>
</reference>
<reference key="4">
    <citation type="journal article" date="2003" name="Science">
        <title>Empirical analysis of transcriptional activity in the Arabidopsis genome.</title>
        <authorList>
            <person name="Yamada K."/>
            <person name="Lim J."/>
            <person name="Dale J.M."/>
            <person name="Chen H."/>
            <person name="Shinn P."/>
            <person name="Palm C.J."/>
            <person name="Southwick A.M."/>
            <person name="Wu H.C."/>
            <person name="Kim C.J."/>
            <person name="Nguyen M."/>
            <person name="Pham P.K."/>
            <person name="Cheuk R.F."/>
            <person name="Karlin-Newmann G."/>
            <person name="Liu S.X."/>
            <person name="Lam B."/>
            <person name="Sakano H."/>
            <person name="Wu T."/>
            <person name="Yu G."/>
            <person name="Miranda M."/>
            <person name="Quach H.L."/>
            <person name="Tripp M."/>
            <person name="Chang C.H."/>
            <person name="Lee J.M."/>
            <person name="Toriumi M.J."/>
            <person name="Chan M.M."/>
            <person name="Tang C.C."/>
            <person name="Onodera C.S."/>
            <person name="Deng J.M."/>
            <person name="Akiyama K."/>
            <person name="Ansari Y."/>
            <person name="Arakawa T."/>
            <person name="Banh J."/>
            <person name="Banno F."/>
            <person name="Bowser L."/>
            <person name="Brooks S.Y."/>
            <person name="Carninci P."/>
            <person name="Chao Q."/>
            <person name="Choy N."/>
            <person name="Enju A."/>
            <person name="Goldsmith A.D."/>
            <person name="Gurjal M."/>
            <person name="Hansen N.F."/>
            <person name="Hayashizaki Y."/>
            <person name="Johnson-Hopson C."/>
            <person name="Hsuan V.W."/>
            <person name="Iida K."/>
            <person name="Karnes M."/>
            <person name="Khan S."/>
            <person name="Koesema E."/>
            <person name="Ishida J."/>
            <person name="Jiang P.X."/>
            <person name="Jones T."/>
            <person name="Kawai J."/>
            <person name="Kamiya A."/>
            <person name="Meyers C."/>
            <person name="Nakajima M."/>
            <person name="Narusaka M."/>
            <person name="Seki M."/>
            <person name="Sakurai T."/>
            <person name="Satou M."/>
            <person name="Tamse R."/>
            <person name="Vaysberg M."/>
            <person name="Wallender E.K."/>
            <person name="Wong C."/>
            <person name="Yamamura Y."/>
            <person name="Yuan S."/>
            <person name="Shinozaki K."/>
            <person name="Davis R.W."/>
            <person name="Theologis A."/>
            <person name="Ecker J.R."/>
        </authorList>
    </citation>
    <scope>NUCLEOTIDE SEQUENCE [LARGE SCALE MRNA]</scope>
    <source>
        <strain>cv. Columbia</strain>
    </source>
</reference>
<reference key="5">
    <citation type="journal article" date="2005" name="Plant Physiol.">
        <title>Homeodomain leucine zipper class I genes in Arabidopsis. Expression patterns and phylogenetic relationships.</title>
        <authorList>
            <person name="Henriksson E."/>
            <person name="Olsson A.S.B."/>
            <person name="Johannesson H."/>
            <person name="Johansson H."/>
            <person name="Hanson J."/>
            <person name="Engstroem P."/>
            <person name="Soederman E."/>
        </authorList>
    </citation>
    <scope>GENE FAMILY</scope>
    <scope>TISSUE SPECIFICITY</scope>
</reference>
<feature type="chain" id="PRO_0000257795" description="Homeobox-leucine zipper protein ATHB-16">
    <location>
        <begin position="1"/>
        <end position="294"/>
    </location>
</feature>
<feature type="DNA-binding region" description="Homeobox" evidence="1">
    <location>
        <begin position="56"/>
        <end position="115"/>
    </location>
</feature>
<feature type="region of interest" description="Disordered" evidence="2">
    <location>
        <begin position="1"/>
        <end position="31"/>
    </location>
</feature>
<feature type="region of interest" description="Leucine-zipper">
    <location>
        <begin position="116"/>
        <end position="151"/>
    </location>
</feature>
<feature type="region of interest" description="Disordered" evidence="2">
    <location>
        <begin position="219"/>
        <end position="241"/>
    </location>
</feature>
<feature type="compositionally biased region" description="Polar residues" evidence="2">
    <location>
        <begin position="1"/>
        <end position="20"/>
    </location>
</feature>
<feature type="compositionally biased region" description="Polar residues" evidence="2">
    <location>
        <begin position="219"/>
        <end position="238"/>
    </location>
</feature>
<feature type="sequence conflict" description="In Ref. 4; AAM91317/AAK96762." evidence="5" ref="4">
    <original>R</original>
    <variation>S</variation>
    <location>
        <position position="139"/>
    </location>
</feature>
<accession>Q940J1</accession>
<accession>Q9SMQ1</accession>
<accession>Q9SWZ8</accession>
<name>ATB16_ARATH</name>